<evidence type="ECO:0000255" key="1">
    <source>
        <dbReference type="HAMAP-Rule" id="MF_01322"/>
    </source>
</evidence>
<dbReference type="EC" id="2.7.7.6" evidence="1"/>
<dbReference type="EMBL" id="CP001079">
    <property type="protein sequence ID" value="ACM49074.1"/>
    <property type="molecule type" value="Genomic_DNA"/>
</dbReference>
<dbReference type="RefSeq" id="WP_010263106.1">
    <property type="nucleotide sequence ID" value="NZ_AFMS01000142.1"/>
</dbReference>
<dbReference type="SMR" id="B9KHW2"/>
<dbReference type="STRING" id="320483.AMF_195"/>
<dbReference type="GeneID" id="7398649"/>
<dbReference type="KEGG" id="amf:AMF_195"/>
<dbReference type="eggNOG" id="COG0086">
    <property type="taxonomic scope" value="Bacteria"/>
</dbReference>
<dbReference type="HOGENOM" id="CLU_000524_3_1_5"/>
<dbReference type="Proteomes" id="UP000007307">
    <property type="component" value="Chromosome"/>
</dbReference>
<dbReference type="GO" id="GO:0000428">
    <property type="term" value="C:DNA-directed RNA polymerase complex"/>
    <property type="evidence" value="ECO:0007669"/>
    <property type="project" value="UniProtKB-KW"/>
</dbReference>
<dbReference type="GO" id="GO:0003677">
    <property type="term" value="F:DNA binding"/>
    <property type="evidence" value="ECO:0007669"/>
    <property type="project" value="UniProtKB-UniRule"/>
</dbReference>
<dbReference type="GO" id="GO:0003899">
    <property type="term" value="F:DNA-directed RNA polymerase activity"/>
    <property type="evidence" value="ECO:0007669"/>
    <property type="project" value="UniProtKB-UniRule"/>
</dbReference>
<dbReference type="GO" id="GO:0000287">
    <property type="term" value="F:magnesium ion binding"/>
    <property type="evidence" value="ECO:0007669"/>
    <property type="project" value="UniProtKB-UniRule"/>
</dbReference>
<dbReference type="GO" id="GO:0008270">
    <property type="term" value="F:zinc ion binding"/>
    <property type="evidence" value="ECO:0007669"/>
    <property type="project" value="UniProtKB-UniRule"/>
</dbReference>
<dbReference type="GO" id="GO:0006351">
    <property type="term" value="P:DNA-templated transcription"/>
    <property type="evidence" value="ECO:0007669"/>
    <property type="project" value="UniProtKB-UniRule"/>
</dbReference>
<dbReference type="CDD" id="cd02655">
    <property type="entry name" value="RNAP_beta'_C"/>
    <property type="match status" value="1"/>
</dbReference>
<dbReference type="CDD" id="cd01609">
    <property type="entry name" value="RNAP_beta'_N"/>
    <property type="match status" value="1"/>
</dbReference>
<dbReference type="Gene3D" id="1.10.132.30">
    <property type="match status" value="1"/>
</dbReference>
<dbReference type="Gene3D" id="1.10.150.390">
    <property type="match status" value="1"/>
</dbReference>
<dbReference type="Gene3D" id="1.10.1790.20">
    <property type="match status" value="1"/>
</dbReference>
<dbReference type="Gene3D" id="1.10.40.90">
    <property type="match status" value="1"/>
</dbReference>
<dbReference type="Gene3D" id="2.40.40.20">
    <property type="match status" value="1"/>
</dbReference>
<dbReference type="Gene3D" id="2.40.50.100">
    <property type="match status" value="3"/>
</dbReference>
<dbReference type="Gene3D" id="4.10.860.120">
    <property type="entry name" value="RNA polymerase II, clamp domain"/>
    <property type="match status" value="1"/>
</dbReference>
<dbReference type="Gene3D" id="1.10.274.100">
    <property type="entry name" value="RNA polymerase Rpb1, domain 3"/>
    <property type="match status" value="2"/>
</dbReference>
<dbReference type="HAMAP" id="MF_01322">
    <property type="entry name" value="RNApol_bact_RpoC"/>
    <property type="match status" value="1"/>
</dbReference>
<dbReference type="InterPro" id="IPR045867">
    <property type="entry name" value="DNA-dir_RpoC_beta_prime"/>
</dbReference>
<dbReference type="InterPro" id="IPR012754">
    <property type="entry name" value="DNA-dir_RpoC_beta_prime_bact"/>
</dbReference>
<dbReference type="InterPro" id="IPR000722">
    <property type="entry name" value="RNA_pol_asu"/>
</dbReference>
<dbReference type="InterPro" id="IPR006592">
    <property type="entry name" value="RNA_pol_N"/>
</dbReference>
<dbReference type="InterPro" id="IPR007080">
    <property type="entry name" value="RNA_pol_Rpb1_1"/>
</dbReference>
<dbReference type="InterPro" id="IPR007066">
    <property type="entry name" value="RNA_pol_Rpb1_3"/>
</dbReference>
<dbReference type="InterPro" id="IPR042102">
    <property type="entry name" value="RNA_pol_Rpb1_3_sf"/>
</dbReference>
<dbReference type="InterPro" id="IPR007083">
    <property type="entry name" value="RNA_pol_Rpb1_4"/>
</dbReference>
<dbReference type="InterPro" id="IPR007081">
    <property type="entry name" value="RNA_pol_Rpb1_5"/>
</dbReference>
<dbReference type="InterPro" id="IPR044893">
    <property type="entry name" value="RNA_pol_Rpb1_clamp_domain"/>
</dbReference>
<dbReference type="InterPro" id="IPR038120">
    <property type="entry name" value="Rpb1_funnel_sf"/>
</dbReference>
<dbReference type="NCBIfam" id="TIGR02386">
    <property type="entry name" value="rpoC_TIGR"/>
    <property type="match status" value="1"/>
</dbReference>
<dbReference type="PANTHER" id="PTHR19376">
    <property type="entry name" value="DNA-DIRECTED RNA POLYMERASE"/>
    <property type="match status" value="1"/>
</dbReference>
<dbReference type="PANTHER" id="PTHR19376:SF54">
    <property type="entry name" value="DNA-DIRECTED RNA POLYMERASE SUBUNIT BETA"/>
    <property type="match status" value="1"/>
</dbReference>
<dbReference type="Pfam" id="PF04997">
    <property type="entry name" value="RNA_pol_Rpb1_1"/>
    <property type="match status" value="1"/>
</dbReference>
<dbReference type="Pfam" id="PF00623">
    <property type="entry name" value="RNA_pol_Rpb1_2"/>
    <property type="match status" value="2"/>
</dbReference>
<dbReference type="Pfam" id="PF04983">
    <property type="entry name" value="RNA_pol_Rpb1_3"/>
    <property type="match status" value="1"/>
</dbReference>
<dbReference type="Pfam" id="PF05000">
    <property type="entry name" value="RNA_pol_Rpb1_4"/>
    <property type="match status" value="1"/>
</dbReference>
<dbReference type="Pfam" id="PF04998">
    <property type="entry name" value="RNA_pol_Rpb1_5"/>
    <property type="match status" value="1"/>
</dbReference>
<dbReference type="SMART" id="SM00663">
    <property type="entry name" value="RPOLA_N"/>
    <property type="match status" value="1"/>
</dbReference>
<dbReference type="SUPFAM" id="SSF64484">
    <property type="entry name" value="beta and beta-prime subunits of DNA dependent RNA-polymerase"/>
    <property type="match status" value="1"/>
</dbReference>
<accession>B9KHW2</accession>
<proteinExistence type="inferred from homology"/>
<keyword id="KW-0240">DNA-directed RNA polymerase</keyword>
<keyword id="KW-0460">Magnesium</keyword>
<keyword id="KW-0479">Metal-binding</keyword>
<keyword id="KW-0548">Nucleotidyltransferase</keyword>
<keyword id="KW-1185">Reference proteome</keyword>
<keyword id="KW-0804">Transcription</keyword>
<keyword id="KW-0808">Transferase</keyword>
<keyword id="KW-0862">Zinc</keyword>
<feature type="chain" id="PRO_1000165833" description="DNA-directed RNA polymerase subunit beta'">
    <location>
        <begin position="1"/>
        <end position="1415"/>
    </location>
</feature>
<feature type="binding site" evidence="1">
    <location>
        <position position="69"/>
    </location>
    <ligand>
        <name>Zn(2+)</name>
        <dbReference type="ChEBI" id="CHEBI:29105"/>
        <label>1</label>
    </ligand>
</feature>
<feature type="binding site" evidence="1">
    <location>
        <position position="71"/>
    </location>
    <ligand>
        <name>Zn(2+)</name>
        <dbReference type="ChEBI" id="CHEBI:29105"/>
        <label>1</label>
    </ligand>
</feature>
<feature type="binding site" evidence="1">
    <location>
        <position position="84"/>
    </location>
    <ligand>
        <name>Zn(2+)</name>
        <dbReference type="ChEBI" id="CHEBI:29105"/>
        <label>1</label>
    </ligand>
</feature>
<feature type="binding site" evidence="1">
    <location>
        <position position="87"/>
    </location>
    <ligand>
        <name>Zn(2+)</name>
        <dbReference type="ChEBI" id="CHEBI:29105"/>
        <label>1</label>
    </ligand>
</feature>
<feature type="binding site" evidence="1">
    <location>
        <position position="461"/>
    </location>
    <ligand>
        <name>Mg(2+)</name>
        <dbReference type="ChEBI" id="CHEBI:18420"/>
    </ligand>
</feature>
<feature type="binding site" evidence="1">
    <location>
        <position position="463"/>
    </location>
    <ligand>
        <name>Mg(2+)</name>
        <dbReference type="ChEBI" id="CHEBI:18420"/>
    </ligand>
</feature>
<feature type="binding site" evidence="1">
    <location>
        <position position="465"/>
    </location>
    <ligand>
        <name>Mg(2+)</name>
        <dbReference type="ChEBI" id="CHEBI:18420"/>
    </ligand>
</feature>
<feature type="binding site" evidence="1">
    <location>
        <position position="805"/>
    </location>
    <ligand>
        <name>Zn(2+)</name>
        <dbReference type="ChEBI" id="CHEBI:29105"/>
        <label>2</label>
    </ligand>
</feature>
<feature type="binding site" evidence="1">
    <location>
        <position position="879"/>
    </location>
    <ligand>
        <name>Zn(2+)</name>
        <dbReference type="ChEBI" id="CHEBI:29105"/>
        <label>2</label>
    </ligand>
</feature>
<feature type="binding site" evidence="1">
    <location>
        <position position="886"/>
    </location>
    <ligand>
        <name>Zn(2+)</name>
        <dbReference type="ChEBI" id="CHEBI:29105"/>
        <label>2</label>
    </ligand>
</feature>
<feature type="binding site" evidence="1">
    <location>
        <position position="889"/>
    </location>
    <ligand>
        <name>Zn(2+)</name>
        <dbReference type="ChEBI" id="CHEBI:29105"/>
        <label>2</label>
    </ligand>
</feature>
<comment type="function">
    <text evidence="1">DNA-dependent RNA polymerase catalyzes the transcription of DNA into RNA using the four ribonucleoside triphosphates as substrates.</text>
</comment>
<comment type="catalytic activity">
    <reaction evidence="1">
        <text>RNA(n) + a ribonucleoside 5'-triphosphate = RNA(n+1) + diphosphate</text>
        <dbReference type="Rhea" id="RHEA:21248"/>
        <dbReference type="Rhea" id="RHEA-COMP:14527"/>
        <dbReference type="Rhea" id="RHEA-COMP:17342"/>
        <dbReference type="ChEBI" id="CHEBI:33019"/>
        <dbReference type="ChEBI" id="CHEBI:61557"/>
        <dbReference type="ChEBI" id="CHEBI:140395"/>
        <dbReference type="EC" id="2.7.7.6"/>
    </reaction>
</comment>
<comment type="cofactor">
    <cofactor evidence="1">
        <name>Mg(2+)</name>
        <dbReference type="ChEBI" id="CHEBI:18420"/>
    </cofactor>
    <text evidence="1">Binds 1 Mg(2+) ion per subunit.</text>
</comment>
<comment type="cofactor">
    <cofactor evidence="1">
        <name>Zn(2+)</name>
        <dbReference type="ChEBI" id="CHEBI:29105"/>
    </cofactor>
    <text evidence="1">Binds 2 Zn(2+) ions per subunit.</text>
</comment>
<comment type="subunit">
    <text evidence="1">The RNAP catalytic core consists of 2 alpha, 1 beta, 1 beta' and 1 omega subunit. When a sigma factor is associated with the core the holoenzyme is formed, which can initiate transcription.</text>
</comment>
<comment type="similarity">
    <text evidence="1">Belongs to the RNA polymerase beta' chain family.</text>
</comment>
<reference key="1">
    <citation type="journal article" date="2009" name="BMC Genomics">
        <title>Conservation in the face of diversity: multistrain analysis of an intracellular bacterium.</title>
        <authorList>
            <person name="Dark M.J."/>
            <person name="Herndon D.R."/>
            <person name="Kappmeyer L.S."/>
            <person name="Gonzales M.P."/>
            <person name="Nordeen E."/>
            <person name="Palmer G.H."/>
            <person name="Knowles D.P. Jr."/>
            <person name="Brayton K.A."/>
        </authorList>
    </citation>
    <scope>NUCLEOTIDE SEQUENCE [LARGE SCALE GENOMIC DNA]</scope>
    <source>
        <strain>Florida</strain>
    </source>
</reference>
<protein>
    <recommendedName>
        <fullName evidence="1">DNA-directed RNA polymerase subunit beta'</fullName>
        <shortName evidence="1">RNAP subunit beta'</shortName>
        <ecNumber evidence="1">2.7.7.6</ecNumber>
    </recommendedName>
    <alternativeName>
        <fullName evidence="1">RNA polymerase subunit beta'</fullName>
    </alternativeName>
    <alternativeName>
        <fullName evidence="1">Transcriptase subunit beta'</fullName>
    </alternativeName>
</protein>
<name>RPOC_ANAMF</name>
<sequence length="1415" mass="156718">MKMLDLYGYTSIAQSFDKICISIASPESIRAMSYGEIKDISTTNYRTFKVEKGGLFCPKIFGPVNDDECLCGKYRKKRYRGIVCEKCGVEVTSSKVRRERMGHIELVSPVAHVWFLKSLPSRIGALLDMPMKSIESILYSGDFVVIDPMTTPFSKGEVISESVYNQARDAYGDEGFIALTGAEAIRELLVRLDLGAIRAGLRSELESTSSEMKRKKVVKRLRIIENFIASGNRPEWMILTVIPVLPPDLRPLVSLENGRPAVSDLNHHYRTIINRNNRLEKLLKLNPPAIMIRNEKRMLQEAVDGLFDSSRRSYVSSRAGSMGYKKSLSDMLKGKQGRFRQNLLGKRVDYSGRSVIVVGPGLKLHQCGLPKKMALELFKPFICSKLKMYGVAPTVKLANKMIQSEKPEVWDVLDEVIREHPILLNRAPTLHRLGLQAFDPVLIEGKAIQLHPLVCSAFNADFDGDQMAVHVPLSLEAQLEARVLMMSTNNILSPSNGRPIIVPSKDIVLGIYYLTLQRAQAPDQEVMSFGELSHVEYALHEGIVHTSSKIKYRMQRCNSDGTIVSEVVETTPGRLILWQIFPQHKDLTFDLVNQVLTVKEITSIVDLVYRSCGQRETVEFSDKLMCLGFQYASQSGISFGCKDMIIPDTKAAHVENASEKIKEFSIQYQDGLITRSERYNKVVDEWSKCTDLIARDMMKAISLSDEEGKLNSIYMMANSGARGSASQMKQLAGMRGLMAKPSGEIIETPIISNFREGLSVFEYFNSTHGARKGLADTALKTANSGYLTRRLVDVAQDCTVVEYDCKTKDGVVARAVIEGGAVVATLDSVVLGRVAAVDTYNPVTEELLLSAGELIDEGKVEKIRVAGLDAVRVRSPLTCESKKGICSLCYGRDLAVGDLVSIGEAVGVIAAQSVGEPGTQLTMRTFHVGGTAMRGVEVSNLIAVLDAEVKLVNSNVVTDKYGNQIVMSRSCEVVLLDSVGNEKMRHSVPYGAKLYVSDGQPVKMMDKMAEWDPYTIPIITEKTGTIKYVDLIYGVSINEVLDESTGISNRVVIDWKLHLQGANLRPRLVLLDEDGNIATLYNDLEASYFVPIGAVLNVQDGQKVHAGDVITRIPRESIKTRDITGGLPRVIELFEARRPKEHAIVSDVDGYVEFGKDYYRSKRRIFIRPVDKSLPAVEYLVPKGKHTIVNEGDFVHKGDLLMDGDPDQHDILRVLGAEALASYMISEIQQVYRLQGVRIDNKHIEVILRQMLQKVEITDPGDTMYLVGEHAGREEVMRLNRKLEEAGKKPVAYVPILQGITKASLDTNSFISAASFQETTKVLTEAAFSGKEDPLYGLKENVIVGRLIPAGTGFIMNKVKKLAMLDQSDYATYYNSELREIMGDLGDELIAEGEAASPGRSGDGYLGNGGGVVDY</sequence>
<organism>
    <name type="scientific">Anaplasma marginale (strain Florida)</name>
    <dbReference type="NCBI Taxonomy" id="320483"/>
    <lineage>
        <taxon>Bacteria</taxon>
        <taxon>Pseudomonadati</taxon>
        <taxon>Pseudomonadota</taxon>
        <taxon>Alphaproteobacteria</taxon>
        <taxon>Rickettsiales</taxon>
        <taxon>Anaplasmataceae</taxon>
        <taxon>Anaplasma</taxon>
    </lineage>
</organism>
<gene>
    <name evidence="1" type="primary">rpoC</name>
    <name type="ordered locus">AMF_195</name>
</gene>